<keyword id="KW-0007">Acetylation</keyword>
<keyword id="KW-0963">Cytoplasm</keyword>
<keyword id="KW-0903">Direct protein sequencing</keyword>
<keyword id="KW-0443">Lipid metabolism</keyword>
<keyword id="KW-1185">Reference proteome</keyword>
<keyword id="KW-0808">Transferase</keyword>
<sequence>MAGKPVLHYFDGRGRMEPIRWLLAAAGVEFEEKFLKTRDDLARLRSDGSLMFQQVPMVEIDGMKLVQTKAILNYIASKYNLYGKDMKERAIIDMYTEGVADLEIMILYYPHMPPEEKEASLAKIKEQTRNRYFPAFEKVLKSHGQDYLVGNRLSRADIALVELLYHVEELDPGVVDNFPLLKALRSRVSNLPTVKKFLQPGSQRKPFDDAKCVESAKKIFS</sequence>
<name>GSTA3_MOUSE</name>
<reference key="1">
    <citation type="journal article" date="1992" name="Biochem. J.">
        <title>Molecular cloning and heterologous expression of a cDNA encoding a mouse glutathione S-transferase Yc subunit possessing high catalytic activity for aflatoxin B1-8,9-epoxide.</title>
        <authorList>
            <person name="Hayes J.D."/>
            <person name="Judah D.J."/>
            <person name="Neal G.E."/>
            <person name="Nguyen T."/>
        </authorList>
    </citation>
    <scope>NUCLEOTIDE SEQUENCE [MRNA]</scope>
    <scope>FUNCTION</scope>
    <source>
        <strain>BALB/cJ</strain>
        <tissue>Liver</tissue>
    </source>
</reference>
<reference key="2">
    <citation type="journal article" date="1992" name="Cancer Res.">
        <title>Complementary DNA cloning, messenger RNA expression, and induction of alpha-class glutathione S-transferases in mouse tissues.</title>
        <authorList>
            <person name="Buetler T.M."/>
            <person name="Eaton D.L."/>
        </authorList>
    </citation>
    <scope>NUCLEOTIDE SEQUENCE [MRNA]</scope>
    <source>
        <strain>BALB/cJ</strain>
        <tissue>Liver</tissue>
    </source>
</reference>
<reference key="3">
    <citation type="journal article" date="2005" name="Science">
        <title>The transcriptional landscape of the mammalian genome.</title>
        <authorList>
            <person name="Carninci P."/>
            <person name="Kasukawa T."/>
            <person name="Katayama S."/>
            <person name="Gough J."/>
            <person name="Frith M.C."/>
            <person name="Maeda N."/>
            <person name="Oyama R."/>
            <person name="Ravasi T."/>
            <person name="Lenhard B."/>
            <person name="Wells C."/>
            <person name="Kodzius R."/>
            <person name="Shimokawa K."/>
            <person name="Bajic V.B."/>
            <person name="Brenner S.E."/>
            <person name="Batalov S."/>
            <person name="Forrest A.R."/>
            <person name="Zavolan M."/>
            <person name="Davis M.J."/>
            <person name="Wilming L.G."/>
            <person name="Aidinis V."/>
            <person name="Allen J.E."/>
            <person name="Ambesi-Impiombato A."/>
            <person name="Apweiler R."/>
            <person name="Aturaliya R.N."/>
            <person name="Bailey T.L."/>
            <person name="Bansal M."/>
            <person name="Baxter L."/>
            <person name="Beisel K.W."/>
            <person name="Bersano T."/>
            <person name="Bono H."/>
            <person name="Chalk A.M."/>
            <person name="Chiu K.P."/>
            <person name="Choudhary V."/>
            <person name="Christoffels A."/>
            <person name="Clutterbuck D.R."/>
            <person name="Crowe M.L."/>
            <person name="Dalla E."/>
            <person name="Dalrymple B.P."/>
            <person name="de Bono B."/>
            <person name="Della Gatta G."/>
            <person name="di Bernardo D."/>
            <person name="Down T."/>
            <person name="Engstrom P."/>
            <person name="Fagiolini M."/>
            <person name="Faulkner G."/>
            <person name="Fletcher C.F."/>
            <person name="Fukushima T."/>
            <person name="Furuno M."/>
            <person name="Futaki S."/>
            <person name="Gariboldi M."/>
            <person name="Georgii-Hemming P."/>
            <person name="Gingeras T.R."/>
            <person name="Gojobori T."/>
            <person name="Green R.E."/>
            <person name="Gustincich S."/>
            <person name="Harbers M."/>
            <person name="Hayashi Y."/>
            <person name="Hensch T.K."/>
            <person name="Hirokawa N."/>
            <person name="Hill D."/>
            <person name="Huminiecki L."/>
            <person name="Iacono M."/>
            <person name="Ikeo K."/>
            <person name="Iwama A."/>
            <person name="Ishikawa T."/>
            <person name="Jakt M."/>
            <person name="Kanapin A."/>
            <person name="Katoh M."/>
            <person name="Kawasawa Y."/>
            <person name="Kelso J."/>
            <person name="Kitamura H."/>
            <person name="Kitano H."/>
            <person name="Kollias G."/>
            <person name="Krishnan S.P."/>
            <person name="Kruger A."/>
            <person name="Kummerfeld S.K."/>
            <person name="Kurochkin I.V."/>
            <person name="Lareau L.F."/>
            <person name="Lazarevic D."/>
            <person name="Lipovich L."/>
            <person name="Liu J."/>
            <person name="Liuni S."/>
            <person name="McWilliam S."/>
            <person name="Madan Babu M."/>
            <person name="Madera M."/>
            <person name="Marchionni L."/>
            <person name="Matsuda H."/>
            <person name="Matsuzawa S."/>
            <person name="Miki H."/>
            <person name="Mignone F."/>
            <person name="Miyake S."/>
            <person name="Morris K."/>
            <person name="Mottagui-Tabar S."/>
            <person name="Mulder N."/>
            <person name="Nakano N."/>
            <person name="Nakauchi H."/>
            <person name="Ng P."/>
            <person name="Nilsson R."/>
            <person name="Nishiguchi S."/>
            <person name="Nishikawa S."/>
            <person name="Nori F."/>
            <person name="Ohara O."/>
            <person name="Okazaki Y."/>
            <person name="Orlando V."/>
            <person name="Pang K.C."/>
            <person name="Pavan W.J."/>
            <person name="Pavesi G."/>
            <person name="Pesole G."/>
            <person name="Petrovsky N."/>
            <person name="Piazza S."/>
            <person name="Reed J."/>
            <person name="Reid J.F."/>
            <person name="Ring B.Z."/>
            <person name="Ringwald M."/>
            <person name="Rost B."/>
            <person name="Ruan Y."/>
            <person name="Salzberg S.L."/>
            <person name="Sandelin A."/>
            <person name="Schneider C."/>
            <person name="Schoenbach C."/>
            <person name="Sekiguchi K."/>
            <person name="Semple C.A."/>
            <person name="Seno S."/>
            <person name="Sessa L."/>
            <person name="Sheng Y."/>
            <person name="Shibata Y."/>
            <person name="Shimada H."/>
            <person name="Shimada K."/>
            <person name="Silva D."/>
            <person name="Sinclair B."/>
            <person name="Sperling S."/>
            <person name="Stupka E."/>
            <person name="Sugiura K."/>
            <person name="Sultana R."/>
            <person name="Takenaka Y."/>
            <person name="Taki K."/>
            <person name="Tammoja K."/>
            <person name="Tan S.L."/>
            <person name="Tang S."/>
            <person name="Taylor M.S."/>
            <person name="Tegner J."/>
            <person name="Teichmann S.A."/>
            <person name="Ueda H.R."/>
            <person name="van Nimwegen E."/>
            <person name="Verardo R."/>
            <person name="Wei C.L."/>
            <person name="Yagi K."/>
            <person name="Yamanishi H."/>
            <person name="Zabarovsky E."/>
            <person name="Zhu S."/>
            <person name="Zimmer A."/>
            <person name="Hide W."/>
            <person name="Bult C."/>
            <person name="Grimmond S.M."/>
            <person name="Teasdale R.D."/>
            <person name="Liu E.T."/>
            <person name="Brusic V."/>
            <person name="Quackenbush J."/>
            <person name="Wahlestedt C."/>
            <person name="Mattick J.S."/>
            <person name="Hume D.A."/>
            <person name="Kai C."/>
            <person name="Sasaki D."/>
            <person name="Tomaru Y."/>
            <person name="Fukuda S."/>
            <person name="Kanamori-Katayama M."/>
            <person name="Suzuki M."/>
            <person name="Aoki J."/>
            <person name="Arakawa T."/>
            <person name="Iida J."/>
            <person name="Imamura K."/>
            <person name="Itoh M."/>
            <person name="Kato T."/>
            <person name="Kawaji H."/>
            <person name="Kawagashira N."/>
            <person name="Kawashima T."/>
            <person name="Kojima M."/>
            <person name="Kondo S."/>
            <person name="Konno H."/>
            <person name="Nakano K."/>
            <person name="Ninomiya N."/>
            <person name="Nishio T."/>
            <person name="Okada M."/>
            <person name="Plessy C."/>
            <person name="Shibata K."/>
            <person name="Shiraki T."/>
            <person name="Suzuki S."/>
            <person name="Tagami M."/>
            <person name="Waki K."/>
            <person name="Watahiki A."/>
            <person name="Okamura-Oho Y."/>
            <person name="Suzuki H."/>
            <person name="Kawai J."/>
            <person name="Hayashizaki Y."/>
        </authorList>
    </citation>
    <scope>NUCLEOTIDE SEQUENCE [LARGE SCALE MRNA]</scope>
    <source>
        <strain>C57BL/6J</strain>
        <tissue>Head</tissue>
        <tissue>Liver</tissue>
    </source>
</reference>
<reference key="4">
    <citation type="submission" date="2005-07" db="EMBL/GenBank/DDBJ databases">
        <authorList>
            <person name="Mural R.J."/>
            <person name="Adams M.D."/>
            <person name="Myers E.W."/>
            <person name="Smith H.O."/>
            <person name="Venter J.C."/>
        </authorList>
    </citation>
    <scope>NUCLEOTIDE SEQUENCE [LARGE SCALE GENOMIC DNA]</scope>
</reference>
<reference key="5">
    <citation type="journal article" date="2004" name="Genome Res.">
        <title>The status, quality, and expansion of the NIH full-length cDNA project: the Mammalian Gene Collection (MGC).</title>
        <authorList>
            <consortium name="The MGC Project Team"/>
        </authorList>
    </citation>
    <scope>NUCLEOTIDE SEQUENCE [LARGE SCALE MRNA]</scope>
    <source>
        <tissue>Brain</tissue>
    </source>
</reference>
<reference key="6">
    <citation type="journal article" date="1991" name="Biochem. J.">
        <title>Regulation of mouse glutathione S-transferases by chemoprotectors. Molecular evidence for the existence of three distinct alpha-class glutathione S-transferase subunits, Ya1, Ya2, and Ya3, in mouse liver.</title>
        <authorList>
            <person name="McLellan L.I."/>
            <person name="Kerr L.A."/>
            <person name="Cronshaw A.D."/>
            <person name="Hayes J.D."/>
        </authorList>
    </citation>
    <scope>PROTEIN SEQUENCE OF 16-56; 63-73; 94-110 AND 112-142</scope>
    <source>
        <tissue>Liver</tissue>
    </source>
</reference>
<reference key="7">
    <citation type="journal article" date="1995" name="Chem. Res. Toxicol.">
        <title>Purification, mass spectrometric characterization, and covalent modification of murine glutathione S-transferases.</title>
        <authorList>
            <person name="Mitchell A.E."/>
            <person name="Morin D."/>
            <person name="Lame M.W."/>
            <person name="Jones A.D."/>
        </authorList>
    </citation>
    <scope>CHARACTERIZATION</scope>
    <scope>MASS SPECTROMETRY</scope>
    <scope>ACETYLATION AT ALA-2</scope>
    <source>
        <strain>CD-1</strain>
        <tissue>Liver</tissue>
    </source>
</reference>
<reference key="8">
    <citation type="journal article" date="2010" name="Cell">
        <title>A tissue-specific atlas of mouse protein phosphorylation and expression.</title>
        <authorList>
            <person name="Huttlin E.L."/>
            <person name="Jedrychowski M.P."/>
            <person name="Elias J.E."/>
            <person name="Goswami T."/>
            <person name="Rad R."/>
            <person name="Beausoleil S.A."/>
            <person name="Villen J."/>
            <person name="Haas W."/>
            <person name="Sowa M.E."/>
            <person name="Gygi S.P."/>
        </authorList>
    </citation>
    <scope>IDENTIFICATION BY MASS SPECTROMETRY [LARGE SCALE ANALYSIS]</scope>
    <source>
        <tissue>Kidney</tissue>
        <tissue>Liver</tissue>
        <tissue>Lung</tissue>
        <tissue>Spleen</tissue>
    </source>
</reference>
<reference key="9">
    <citation type="journal article" date="2013" name="Mol. Cell">
        <title>SIRT5-mediated lysine desuccinylation impacts diverse metabolic pathways.</title>
        <authorList>
            <person name="Park J."/>
            <person name="Chen Y."/>
            <person name="Tishkoff D.X."/>
            <person name="Peng C."/>
            <person name="Tan M."/>
            <person name="Dai L."/>
            <person name="Xie Z."/>
            <person name="Zhang Y."/>
            <person name="Zwaans B.M."/>
            <person name="Skinner M.E."/>
            <person name="Lombard D.B."/>
            <person name="Zhao Y."/>
        </authorList>
    </citation>
    <scope>ACETYLATION [LARGE SCALE ANALYSIS] AT ALA-2</scope>
    <scope>SUCCINYLATION [LARGE SCALE ANALYSIS] AT LYS-4</scope>
    <scope>CLEAVAGE OF INITIATOR METHIONINE [LARGE SCALE ANALYSIS]</scope>
    <scope>IDENTIFICATION BY MASS SPECTROMETRY [LARGE SCALE ANALYSIS]</scope>
    <source>
        <tissue>Liver</tissue>
    </source>
</reference>
<comment type="function">
    <text evidence="4 5">Conjugation of reduced glutathione to a wide number of exogenous and endogenous hydrophobic electrophiles. Catalyzes isomerization reactions that contribute to the biosynthesis of steroid hormones. Efficiently catalyze obligatory double-bond isomerizations of delta(5)-androstene-3,17-dione and delta(5)-pregnene-3,20-dione, precursors to testosterone and progesterone, respectively (By similarity). Has a high catalytic activity for aflatoxin B1-8,9 epoxide (PubMed:1637297).</text>
</comment>
<comment type="catalytic activity">
    <reaction evidence="4">
        <text>RX + glutathione = an S-substituted glutathione + a halide anion + H(+)</text>
        <dbReference type="Rhea" id="RHEA:16437"/>
        <dbReference type="ChEBI" id="CHEBI:15378"/>
        <dbReference type="ChEBI" id="CHEBI:16042"/>
        <dbReference type="ChEBI" id="CHEBI:17792"/>
        <dbReference type="ChEBI" id="CHEBI:57925"/>
        <dbReference type="ChEBI" id="CHEBI:90779"/>
        <dbReference type="EC" id="2.5.1.18"/>
    </reaction>
    <physiologicalReaction direction="left-to-right" evidence="4">
        <dbReference type="Rhea" id="RHEA:16438"/>
    </physiologicalReaction>
</comment>
<comment type="catalytic activity">
    <reaction evidence="4">
        <text>androst-5-ene-3,17-dione = androst-4-ene-3,17-dione</text>
        <dbReference type="Rhea" id="RHEA:43936"/>
        <dbReference type="ChEBI" id="CHEBI:16422"/>
        <dbReference type="ChEBI" id="CHEBI:83865"/>
    </reaction>
    <physiologicalReaction direction="left-to-right" evidence="4">
        <dbReference type="Rhea" id="RHEA:43937"/>
    </physiologicalReaction>
</comment>
<comment type="catalytic activity">
    <reaction evidence="4">
        <text>pregn-5-ene-3,20-dione = progesterone</text>
        <dbReference type="Rhea" id="RHEA:43928"/>
        <dbReference type="ChEBI" id="CHEBI:17026"/>
        <dbReference type="ChEBI" id="CHEBI:63837"/>
    </reaction>
    <physiologicalReaction direction="left-to-right" evidence="4">
        <dbReference type="Rhea" id="RHEA:43929"/>
    </physiologicalReaction>
</comment>
<comment type="subunit">
    <text>Homodimer.</text>
</comment>
<comment type="subcellular location">
    <subcellularLocation>
        <location>Cytoplasm</location>
    </subcellularLocation>
</comment>
<comment type="mass spectrometry"/>
<comment type="similarity">
    <text evidence="7">Belongs to the GST superfamily. Alpha family.</text>
</comment>
<accession>P30115</accession>
<accession>Q544Y6</accession>
<gene>
    <name evidence="8" type="primary">Gsta3</name>
    <name type="synonym">Gstyc</name>
</gene>
<organism>
    <name type="scientific">Mus musculus</name>
    <name type="common">Mouse</name>
    <dbReference type="NCBI Taxonomy" id="10090"/>
    <lineage>
        <taxon>Eukaryota</taxon>
        <taxon>Metazoa</taxon>
        <taxon>Chordata</taxon>
        <taxon>Craniata</taxon>
        <taxon>Vertebrata</taxon>
        <taxon>Euteleostomi</taxon>
        <taxon>Mammalia</taxon>
        <taxon>Eutheria</taxon>
        <taxon>Euarchontoglires</taxon>
        <taxon>Glires</taxon>
        <taxon>Rodentia</taxon>
        <taxon>Myomorpha</taxon>
        <taxon>Muroidea</taxon>
        <taxon>Muridae</taxon>
        <taxon>Murinae</taxon>
        <taxon>Mus</taxon>
        <taxon>Mus</taxon>
    </lineage>
</organism>
<dbReference type="EC" id="2.5.1.18"/>
<dbReference type="EMBL" id="X65021">
    <property type="protein sequence ID" value="CAA46155.1"/>
    <property type="molecule type" value="mRNA"/>
</dbReference>
<dbReference type="EMBL" id="M73483">
    <property type="protein sequence ID" value="AAA37751.1"/>
    <property type="molecule type" value="mRNA"/>
</dbReference>
<dbReference type="EMBL" id="AK014076">
    <property type="protein sequence ID" value="BAB29143.1"/>
    <property type="molecule type" value="mRNA"/>
</dbReference>
<dbReference type="EMBL" id="AK149543">
    <property type="protein sequence ID" value="BAE28948.1"/>
    <property type="molecule type" value="mRNA"/>
</dbReference>
<dbReference type="EMBL" id="CH466536">
    <property type="protein sequence ID" value="EDL14389.1"/>
    <property type="molecule type" value="Genomic_DNA"/>
</dbReference>
<dbReference type="EMBL" id="CH466536">
    <property type="protein sequence ID" value="EDL14390.1"/>
    <property type="molecule type" value="Genomic_DNA"/>
</dbReference>
<dbReference type="EMBL" id="BC147272">
    <property type="protein sequence ID" value="AAI47273.1"/>
    <property type="molecule type" value="mRNA"/>
</dbReference>
<dbReference type="EMBL" id="BC147273">
    <property type="protein sequence ID" value="AAI47274.1"/>
    <property type="molecule type" value="mRNA"/>
</dbReference>
<dbReference type="CCDS" id="CCDS14847.1"/>
<dbReference type="PIR" id="S24322">
    <property type="entry name" value="S24322"/>
</dbReference>
<dbReference type="RefSeq" id="NP_001070821.1">
    <property type="nucleotide sequence ID" value="NM_001077353.3"/>
</dbReference>
<dbReference type="RefSeq" id="NP_034486.2">
    <property type="nucleotide sequence ID" value="NM_010356.4"/>
</dbReference>
<dbReference type="SMR" id="P30115"/>
<dbReference type="BioGRID" id="200092">
    <property type="interactions" value="1"/>
</dbReference>
<dbReference type="FunCoup" id="P30115">
    <property type="interactions" value="354"/>
</dbReference>
<dbReference type="IntAct" id="P30115">
    <property type="interactions" value="1"/>
</dbReference>
<dbReference type="STRING" id="10090.ENSMUSP00000027067"/>
<dbReference type="GlyGen" id="P30115">
    <property type="glycosylation" value="1 site, 1 O-linked glycan (1 site)"/>
</dbReference>
<dbReference type="iPTMnet" id="P30115"/>
<dbReference type="PhosphoSitePlus" id="P30115"/>
<dbReference type="SwissPalm" id="P30115"/>
<dbReference type="CPTAC" id="non-CPTAC-3324"/>
<dbReference type="jPOST" id="P30115"/>
<dbReference type="PaxDb" id="10090-ENSMUSP00000027067"/>
<dbReference type="PeptideAtlas" id="P30115"/>
<dbReference type="ProteomicsDB" id="271475"/>
<dbReference type="Antibodypedia" id="30946">
    <property type="antibodies" value="66 antibodies from 17 providers"/>
</dbReference>
<dbReference type="DNASU" id="14859"/>
<dbReference type="Ensembl" id="ENSMUST00000027067.15">
    <property type="protein sequence ID" value="ENSMUSP00000027067.9"/>
    <property type="gene ID" value="ENSMUSG00000025934.16"/>
</dbReference>
<dbReference type="Ensembl" id="ENSMUST00000121676.8">
    <property type="protein sequence ID" value="ENSMUSP00000113262.2"/>
    <property type="gene ID" value="ENSMUSG00000025934.16"/>
</dbReference>
<dbReference type="GeneID" id="14859"/>
<dbReference type="KEGG" id="mmu:14859"/>
<dbReference type="UCSC" id="uc007alk.2">
    <property type="organism name" value="mouse"/>
</dbReference>
<dbReference type="AGR" id="MGI:95856"/>
<dbReference type="CTD" id="2940"/>
<dbReference type="MGI" id="MGI:95856">
    <property type="gene designation" value="Gsta3"/>
</dbReference>
<dbReference type="VEuPathDB" id="HostDB:ENSMUSG00000025934"/>
<dbReference type="eggNOG" id="KOG1695">
    <property type="taxonomic scope" value="Eukaryota"/>
</dbReference>
<dbReference type="GeneTree" id="ENSGT00940000163367"/>
<dbReference type="HOGENOM" id="CLU_039475_4_0_1"/>
<dbReference type="InParanoid" id="P30115"/>
<dbReference type="OMA" id="EEYFANM"/>
<dbReference type="OrthoDB" id="414243at2759"/>
<dbReference type="PhylomeDB" id="P30115"/>
<dbReference type="TreeFam" id="TF105321"/>
<dbReference type="Reactome" id="R-MMU-156590">
    <property type="pathway name" value="Glutathione conjugation"/>
</dbReference>
<dbReference type="Reactome" id="R-MMU-189483">
    <property type="pathway name" value="Heme degradation"/>
</dbReference>
<dbReference type="Reactome" id="R-MMU-9748787">
    <property type="pathway name" value="Azathioprine ADME"/>
</dbReference>
<dbReference type="BioGRID-ORCS" id="14859">
    <property type="hits" value="2 hits in 78 CRISPR screens"/>
</dbReference>
<dbReference type="ChiTaRS" id="Gsta3">
    <property type="organism name" value="mouse"/>
</dbReference>
<dbReference type="PRO" id="PR:P30115"/>
<dbReference type="Proteomes" id="UP000000589">
    <property type="component" value="Chromosome 1"/>
</dbReference>
<dbReference type="RNAct" id="P30115">
    <property type="molecule type" value="protein"/>
</dbReference>
<dbReference type="Bgee" id="ENSMUSG00000025934">
    <property type="expression patterns" value="Expressed in left lobe of liver and 168 other cell types or tissues"/>
</dbReference>
<dbReference type="ExpressionAtlas" id="P30115">
    <property type="expression patterns" value="baseline and differential"/>
</dbReference>
<dbReference type="GO" id="GO:0005829">
    <property type="term" value="C:cytosol"/>
    <property type="evidence" value="ECO:0000314"/>
    <property type="project" value="FlyBase"/>
</dbReference>
<dbReference type="GO" id="GO:0005739">
    <property type="term" value="C:mitochondrion"/>
    <property type="evidence" value="ECO:0000314"/>
    <property type="project" value="FlyBase"/>
</dbReference>
<dbReference type="GO" id="GO:0004364">
    <property type="term" value="F:glutathione transferase activity"/>
    <property type="evidence" value="ECO:0000315"/>
    <property type="project" value="MGI"/>
</dbReference>
<dbReference type="GO" id="GO:0046223">
    <property type="term" value="P:aflatoxin catabolic process"/>
    <property type="evidence" value="ECO:0000315"/>
    <property type="project" value="MGI"/>
</dbReference>
<dbReference type="GO" id="GO:0006749">
    <property type="term" value="P:glutathione metabolic process"/>
    <property type="evidence" value="ECO:0000250"/>
    <property type="project" value="UniProtKB"/>
</dbReference>
<dbReference type="GO" id="GO:0006629">
    <property type="term" value="P:lipid metabolic process"/>
    <property type="evidence" value="ECO:0007669"/>
    <property type="project" value="UniProtKB-KW"/>
</dbReference>
<dbReference type="GO" id="GO:0001657">
    <property type="term" value="P:ureteric bud development"/>
    <property type="evidence" value="ECO:0000270"/>
    <property type="project" value="UniProtKB"/>
</dbReference>
<dbReference type="CDD" id="cd03208">
    <property type="entry name" value="GST_C_Alpha"/>
    <property type="match status" value="1"/>
</dbReference>
<dbReference type="CDD" id="cd03077">
    <property type="entry name" value="GST_N_Alpha"/>
    <property type="match status" value="1"/>
</dbReference>
<dbReference type="FunFam" id="1.20.1050.10:FF:000005">
    <property type="entry name" value="Glutathione S-transferase A1"/>
    <property type="match status" value="1"/>
</dbReference>
<dbReference type="Gene3D" id="1.20.1050.10">
    <property type="match status" value="1"/>
</dbReference>
<dbReference type="Gene3D" id="3.40.30.10">
    <property type="entry name" value="Glutaredoxin"/>
    <property type="match status" value="1"/>
</dbReference>
<dbReference type="InterPro" id="IPR010987">
    <property type="entry name" value="Glutathione-S-Trfase_C-like"/>
</dbReference>
<dbReference type="InterPro" id="IPR036282">
    <property type="entry name" value="Glutathione-S-Trfase_C_sf"/>
</dbReference>
<dbReference type="InterPro" id="IPR004045">
    <property type="entry name" value="Glutathione_S-Trfase_N"/>
</dbReference>
<dbReference type="InterPro" id="IPR003080">
    <property type="entry name" value="GST_alpha"/>
</dbReference>
<dbReference type="InterPro" id="IPR004046">
    <property type="entry name" value="GST_C"/>
</dbReference>
<dbReference type="InterPro" id="IPR050213">
    <property type="entry name" value="GST_superfamily"/>
</dbReference>
<dbReference type="InterPro" id="IPR036249">
    <property type="entry name" value="Thioredoxin-like_sf"/>
</dbReference>
<dbReference type="PANTHER" id="PTHR11571">
    <property type="entry name" value="GLUTATHIONE S-TRANSFERASE"/>
    <property type="match status" value="1"/>
</dbReference>
<dbReference type="PANTHER" id="PTHR11571:SF107">
    <property type="entry name" value="GLUTATHIONE S-TRANSFERASE A1"/>
    <property type="match status" value="1"/>
</dbReference>
<dbReference type="Pfam" id="PF00043">
    <property type="entry name" value="GST_C"/>
    <property type="match status" value="1"/>
</dbReference>
<dbReference type="Pfam" id="PF02798">
    <property type="entry name" value="GST_N"/>
    <property type="match status" value="1"/>
</dbReference>
<dbReference type="PRINTS" id="PR01266">
    <property type="entry name" value="GSTRNSFRASEA"/>
</dbReference>
<dbReference type="SFLD" id="SFLDG01205">
    <property type="entry name" value="AMPS.1"/>
    <property type="match status" value="1"/>
</dbReference>
<dbReference type="SFLD" id="SFLDG00363">
    <property type="entry name" value="AMPS_(cytGST):_Alpha-__Mu-__Pi"/>
    <property type="match status" value="1"/>
</dbReference>
<dbReference type="SUPFAM" id="SSF47616">
    <property type="entry name" value="GST C-terminal domain-like"/>
    <property type="match status" value="1"/>
</dbReference>
<dbReference type="SUPFAM" id="SSF52833">
    <property type="entry name" value="Thioredoxin-like"/>
    <property type="match status" value="1"/>
</dbReference>
<dbReference type="PROSITE" id="PS50405">
    <property type="entry name" value="GST_CTER"/>
    <property type="match status" value="1"/>
</dbReference>
<dbReference type="PROSITE" id="PS50404">
    <property type="entry name" value="GST_NTER"/>
    <property type="match status" value="1"/>
</dbReference>
<evidence type="ECO:0000250" key="1">
    <source>
        <dbReference type="UniProtKB" id="P08263"/>
    </source>
</evidence>
<evidence type="ECO:0000250" key="2">
    <source>
        <dbReference type="UniProtKB" id="P13745"/>
    </source>
</evidence>
<evidence type="ECO:0000250" key="3">
    <source>
        <dbReference type="UniProtKB" id="P30711"/>
    </source>
</evidence>
<evidence type="ECO:0000250" key="4">
    <source>
        <dbReference type="UniProtKB" id="Q16772"/>
    </source>
</evidence>
<evidence type="ECO:0000269" key="5">
    <source>
    </source>
</evidence>
<evidence type="ECO:0000269" key="6">
    <source>
    </source>
</evidence>
<evidence type="ECO:0000305" key="7"/>
<evidence type="ECO:0000312" key="8">
    <source>
        <dbReference type="MGI" id="MGI:95856"/>
    </source>
</evidence>
<evidence type="ECO:0007744" key="9">
    <source>
    </source>
</evidence>
<proteinExistence type="evidence at protein level"/>
<feature type="initiator methionine" description="Removed" evidence="6 9">
    <location>
        <position position="1"/>
    </location>
</feature>
<feature type="chain" id="PRO_0000185790" description="Glutathione S-transferase A3">
    <location>
        <begin position="2"/>
        <end position="221"/>
    </location>
</feature>
<feature type="domain" description="GST N-terminal">
    <location>
        <begin position="3"/>
        <end position="83"/>
    </location>
</feature>
<feature type="domain" description="GST C-terminal">
    <location>
        <begin position="85"/>
        <end position="207"/>
    </location>
</feature>
<feature type="binding site" evidence="2">
    <location>
        <position position="9"/>
    </location>
    <ligand>
        <name>glutathione</name>
        <dbReference type="ChEBI" id="CHEBI:57925"/>
    </ligand>
</feature>
<feature type="binding site" evidence="1">
    <location>
        <position position="45"/>
    </location>
    <ligand>
        <name>glutathione</name>
        <dbReference type="ChEBI" id="CHEBI:57925"/>
    </ligand>
</feature>
<feature type="binding site" evidence="3">
    <location>
        <begin position="54"/>
        <end position="55"/>
    </location>
    <ligand>
        <name>glutathione</name>
        <dbReference type="ChEBI" id="CHEBI:57925"/>
    </ligand>
</feature>
<feature type="binding site" evidence="2">
    <location>
        <begin position="67"/>
        <end position="68"/>
    </location>
    <ligand>
        <name>glutathione</name>
        <dbReference type="ChEBI" id="CHEBI:57925"/>
    </ligand>
</feature>
<feature type="modified residue" description="N-acetylalanine" evidence="6 9">
    <location>
        <position position="2"/>
    </location>
</feature>
<feature type="modified residue" description="N6-succinyllysine" evidence="9">
    <location>
        <position position="4"/>
    </location>
</feature>
<protein>
    <recommendedName>
        <fullName evidence="7">Glutathione S-transferase A3</fullName>
        <ecNumber>2.5.1.18</ecNumber>
    </recommendedName>
    <alternativeName>
        <fullName>GST class-alpha member 3</fullName>
    </alternativeName>
    <alternativeName>
        <fullName>Glutathione S-transferase Ya3</fullName>
    </alternativeName>
    <alternativeName>
        <fullName>Glutathione S-transferase Yc</fullName>
    </alternativeName>
</protein>